<reference key="1">
    <citation type="journal article" date="2000" name="Nature">
        <title>Sequence and analysis of chromosome 1 of the plant Arabidopsis thaliana.</title>
        <authorList>
            <person name="Theologis A."/>
            <person name="Ecker J.R."/>
            <person name="Palm C.J."/>
            <person name="Federspiel N.A."/>
            <person name="Kaul S."/>
            <person name="White O."/>
            <person name="Alonso J."/>
            <person name="Altafi H."/>
            <person name="Araujo R."/>
            <person name="Bowman C.L."/>
            <person name="Brooks S.Y."/>
            <person name="Buehler E."/>
            <person name="Chan A."/>
            <person name="Chao Q."/>
            <person name="Chen H."/>
            <person name="Cheuk R.F."/>
            <person name="Chin C.W."/>
            <person name="Chung M.K."/>
            <person name="Conn L."/>
            <person name="Conway A.B."/>
            <person name="Conway A.R."/>
            <person name="Creasy T.H."/>
            <person name="Dewar K."/>
            <person name="Dunn P."/>
            <person name="Etgu P."/>
            <person name="Feldblyum T.V."/>
            <person name="Feng J.-D."/>
            <person name="Fong B."/>
            <person name="Fujii C.Y."/>
            <person name="Gill J.E."/>
            <person name="Goldsmith A.D."/>
            <person name="Haas B."/>
            <person name="Hansen N.F."/>
            <person name="Hughes B."/>
            <person name="Huizar L."/>
            <person name="Hunter J.L."/>
            <person name="Jenkins J."/>
            <person name="Johnson-Hopson C."/>
            <person name="Khan S."/>
            <person name="Khaykin E."/>
            <person name="Kim C.J."/>
            <person name="Koo H.L."/>
            <person name="Kremenetskaia I."/>
            <person name="Kurtz D.B."/>
            <person name="Kwan A."/>
            <person name="Lam B."/>
            <person name="Langin-Hooper S."/>
            <person name="Lee A."/>
            <person name="Lee J.M."/>
            <person name="Lenz C.A."/>
            <person name="Li J.H."/>
            <person name="Li Y.-P."/>
            <person name="Lin X."/>
            <person name="Liu S.X."/>
            <person name="Liu Z.A."/>
            <person name="Luros J.S."/>
            <person name="Maiti R."/>
            <person name="Marziali A."/>
            <person name="Militscher J."/>
            <person name="Miranda M."/>
            <person name="Nguyen M."/>
            <person name="Nierman W.C."/>
            <person name="Osborne B.I."/>
            <person name="Pai G."/>
            <person name="Peterson J."/>
            <person name="Pham P.K."/>
            <person name="Rizzo M."/>
            <person name="Rooney T."/>
            <person name="Rowley D."/>
            <person name="Sakano H."/>
            <person name="Salzberg S.L."/>
            <person name="Schwartz J.R."/>
            <person name="Shinn P."/>
            <person name="Southwick A.M."/>
            <person name="Sun H."/>
            <person name="Tallon L.J."/>
            <person name="Tambunga G."/>
            <person name="Toriumi M.J."/>
            <person name="Town C.D."/>
            <person name="Utterback T."/>
            <person name="Van Aken S."/>
            <person name="Vaysberg M."/>
            <person name="Vysotskaia V.S."/>
            <person name="Walker M."/>
            <person name="Wu D."/>
            <person name="Yu G."/>
            <person name="Fraser C.M."/>
            <person name="Venter J.C."/>
            <person name="Davis R.W."/>
        </authorList>
    </citation>
    <scope>NUCLEOTIDE SEQUENCE [LARGE SCALE GENOMIC DNA]</scope>
    <source>
        <strain>cv. Columbia</strain>
    </source>
</reference>
<reference key="2">
    <citation type="journal article" date="2017" name="Plant J.">
        <title>Araport11: a complete reannotation of the Arabidopsis thaliana reference genome.</title>
        <authorList>
            <person name="Cheng C.Y."/>
            <person name="Krishnakumar V."/>
            <person name="Chan A.P."/>
            <person name="Thibaud-Nissen F."/>
            <person name="Schobel S."/>
            <person name="Town C.D."/>
        </authorList>
    </citation>
    <scope>GENOME REANNOTATION</scope>
    <source>
        <strain>cv. Columbia</strain>
    </source>
</reference>
<reference key="3">
    <citation type="journal article" date="2004" name="Genome Res.">
        <title>Whole genome sequence comparisons and 'full-length' cDNA sequences: a combined approach to evaluate and improve Arabidopsis genome annotation.</title>
        <authorList>
            <person name="Castelli V."/>
            <person name="Aury J.-M."/>
            <person name="Jaillon O."/>
            <person name="Wincker P."/>
            <person name="Clepet C."/>
            <person name="Menard M."/>
            <person name="Cruaud C."/>
            <person name="Quetier F."/>
            <person name="Scarpelli C."/>
            <person name="Schaechter V."/>
            <person name="Temple G."/>
            <person name="Caboche M."/>
            <person name="Weissenbach J."/>
            <person name="Salanoubat M."/>
        </authorList>
    </citation>
    <scope>NUCLEOTIDE SEQUENCE [LARGE SCALE MRNA]</scope>
    <source>
        <strain>cv. Columbia</strain>
    </source>
</reference>
<reference key="4">
    <citation type="journal article" date="2003" name="Mol. Biol. Evol.">
        <title>The basic helix-loop-helix transcription factor family in plants: a genome-wide study of protein structure and functional diversity.</title>
        <authorList>
            <person name="Heim M.A."/>
            <person name="Jakoby M."/>
            <person name="Werber M."/>
            <person name="Martin C."/>
            <person name="Weisshaar B."/>
            <person name="Bailey P.C."/>
        </authorList>
    </citation>
    <scope>GENE FAMILY</scope>
    <scope>NOMENCLATURE</scope>
</reference>
<reference key="5">
    <citation type="journal article" date="2003" name="Plant Cell">
        <title>The Arabidopsis basic/helix-loop-helix transcription factor family.</title>
        <authorList>
            <person name="Toledo-Ortiz G."/>
            <person name="Huq E."/>
            <person name="Quail P.H."/>
        </authorList>
    </citation>
    <scope>GENE FAMILY</scope>
</reference>
<reference key="6">
    <citation type="journal article" date="2003" name="Plant Cell">
        <title>Update on the basic helix-loop-helix transcription factor gene family in Arabidopsis thaliana.</title>
        <authorList>
            <person name="Bailey P.C."/>
            <person name="Martin C."/>
            <person name="Toledo-Ortiz G."/>
            <person name="Quail P.H."/>
            <person name="Huq E."/>
            <person name="Heim M.A."/>
            <person name="Jakoby M."/>
            <person name="Werber M."/>
            <person name="Weisshaar B."/>
        </authorList>
    </citation>
    <scope>GENE FAMILY</scope>
    <scope>NOMENCLATURE</scope>
</reference>
<accession>Q9SFZ3</accession>
<dbReference type="EMBL" id="AC012375">
    <property type="protein sequence ID" value="AAF24944.1"/>
    <property type="status" value="ALT_SEQ"/>
    <property type="molecule type" value="Genomic_DNA"/>
</dbReference>
<dbReference type="EMBL" id="CP002684">
    <property type="protein sequence ID" value="AEE30860.1"/>
    <property type="molecule type" value="Genomic_DNA"/>
</dbReference>
<dbReference type="EMBL" id="BX814188">
    <property type="status" value="NOT_ANNOTATED_CDS"/>
    <property type="molecule type" value="mRNA"/>
</dbReference>
<dbReference type="PIR" id="F86401">
    <property type="entry name" value="F86401"/>
</dbReference>
<dbReference type="RefSeq" id="NP_174087.1">
    <property type="nucleotide sequence ID" value="NM_102531.4"/>
</dbReference>
<dbReference type="SMR" id="Q9SFZ3"/>
<dbReference type="BioGRID" id="24893">
    <property type="interactions" value="1"/>
</dbReference>
<dbReference type="FunCoup" id="Q9SFZ3">
    <property type="interactions" value="451"/>
</dbReference>
<dbReference type="IntAct" id="Q9SFZ3">
    <property type="interactions" value="2"/>
</dbReference>
<dbReference type="STRING" id="3702.Q9SFZ3"/>
<dbReference type="GlyGen" id="Q9SFZ3">
    <property type="glycosylation" value="1 site"/>
</dbReference>
<dbReference type="PaxDb" id="3702-AT1G27660.1"/>
<dbReference type="ProteomicsDB" id="240342"/>
<dbReference type="EnsemblPlants" id="AT1G27660.1">
    <property type="protein sequence ID" value="AT1G27660.1"/>
    <property type="gene ID" value="AT1G27660"/>
</dbReference>
<dbReference type="GeneID" id="839658"/>
<dbReference type="Gramene" id="AT1G27660.1">
    <property type="protein sequence ID" value="AT1G27660.1"/>
    <property type="gene ID" value="AT1G27660"/>
</dbReference>
<dbReference type="KEGG" id="ath:AT1G27660"/>
<dbReference type="Araport" id="AT1G27660"/>
<dbReference type="TAIR" id="AT1G27660"/>
<dbReference type="eggNOG" id="ENOG502QUG3">
    <property type="taxonomic scope" value="Eukaryota"/>
</dbReference>
<dbReference type="HOGENOM" id="CLU_052914_0_0_1"/>
<dbReference type="InParanoid" id="Q9SFZ3"/>
<dbReference type="OMA" id="FPINGDY"/>
<dbReference type="PhylomeDB" id="Q9SFZ3"/>
<dbReference type="PRO" id="PR:Q9SFZ3"/>
<dbReference type="Proteomes" id="UP000006548">
    <property type="component" value="Chromosome 1"/>
</dbReference>
<dbReference type="ExpressionAtlas" id="Q9SFZ3">
    <property type="expression patterns" value="baseline and differential"/>
</dbReference>
<dbReference type="GO" id="GO:0005634">
    <property type="term" value="C:nucleus"/>
    <property type="evidence" value="ECO:0007669"/>
    <property type="project" value="UniProtKB-SubCell"/>
</dbReference>
<dbReference type="GO" id="GO:0003677">
    <property type="term" value="F:DNA binding"/>
    <property type="evidence" value="ECO:0007669"/>
    <property type="project" value="UniProtKB-KW"/>
</dbReference>
<dbReference type="GO" id="GO:0003700">
    <property type="term" value="F:DNA-binding transcription factor activity"/>
    <property type="evidence" value="ECO:0000250"/>
    <property type="project" value="TAIR"/>
</dbReference>
<dbReference type="GO" id="GO:0046983">
    <property type="term" value="F:protein dimerization activity"/>
    <property type="evidence" value="ECO:0007669"/>
    <property type="project" value="InterPro"/>
</dbReference>
<dbReference type="CDD" id="cd11393">
    <property type="entry name" value="bHLH_AtbHLH_like"/>
    <property type="match status" value="1"/>
</dbReference>
<dbReference type="FunFam" id="4.10.280.10:FF:000032">
    <property type="entry name" value="Transcription factor bHLH123 family"/>
    <property type="match status" value="1"/>
</dbReference>
<dbReference type="Gene3D" id="4.10.280.10">
    <property type="entry name" value="Helix-loop-helix DNA-binding domain"/>
    <property type="match status" value="1"/>
</dbReference>
<dbReference type="InterPro" id="IPR045239">
    <property type="entry name" value="bHLH95_bHLH"/>
</dbReference>
<dbReference type="InterPro" id="IPR011598">
    <property type="entry name" value="bHLH_dom"/>
</dbReference>
<dbReference type="InterPro" id="IPR036638">
    <property type="entry name" value="HLH_DNA-bd_sf"/>
</dbReference>
<dbReference type="InterPro" id="IPR045843">
    <property type="entry name" value="IND-like"/>
</dbReference>
<dbReference type="PANTHER" id="PTHR16223:SF56">
    <property type="entry name" value="TRANSCRIPTION FACTOR BHLH110"/>
    <property type="match status" value="1"/>
</dbReference>
<dbReference type="PANTHER" id="PTHR16223">
    <property type="entry name" value="TRANSCRIPTION FACTOR BHLH83-RELATED"/>
    <property type="match status" value="1"/>
</dbReference>
<dbReference type="SUPFAM" id="SSF47459">
    <property type="entry name" value="HLH, helix-loop-helix DNA-binding domain"/>
    <property type="match status" value="1"/>
</dbReference>
<dbReference type="PROSITE" id="PS50888">
    <property type="entry name" value="BHLH"/>
    <property type="match status" value="1"/>
</dbReference>
<name>BH110_ARATH</name>
<proteinExistence type="evidence at transcript level"/>
<organism>
    <name type="scientific">Arabidopsis thaliana</name>
    <name type="common">Mouse-ear cress</name>
    <dbReference type="NCBI Taxonomy" id="3702"/>
    <lineage>
        <taxon>Eukaryota</taxon>
        <taxon>Viridiplantae</taxon>
        <taxon>Streptophyta</taxon>
        <taxon>Embryophyta</taxon>
        <taxon>Tracheophyta</taxon>
        <taxon>Spermatophyta</taxon>
        <taxon>Magnoliopsida</taxon>
        <taxon>eudicotyledons</taxon>
        <taxon>Gunneridae</taxon>
        <taxon>Pentapetalae</taxon>
        <taxon>rosids</taxon>
        <taxon>malvids</taxon>
        <taxon>Brassicales</taxon>
        <taxon>Brassicaceae</taxon>
        <taxon>Camelineae</taxon>
        <taxon>Arabidopsis</taxon>
    </lineage>
</organism>
<protein>
    <recommendedName>
        <fullName>Transcription factor bHLH110</fullName>
    </recommendedName>
    <alternativeName>
        <fullName>Basic helix-loop-helix protein 110</fullName>
        <shortName>AtbHLH110</shortName>
        <shortName>bHLH 110</shortName>
    </alternativeName>
    <alternativeName>
        <fullName>Transcription factor EN 59</fullName>
    </alternativeName>
    <alternativeName>
        <fullName>bHLH transcription factor bHLH110</fullName>
    </alternativeName>
</protein>
<evidence type="ECO:0000255" key="1">
    <source>
        <dbReference type="PROSITE-ProRule" id="PRU00981"/>
    </source>
</evidence>
<evidence type="ECO:0000256" key="2">
    <source>
        <dbReference type="SAM" id="MobiDB-lite"/>
    </source>
</evidence>
<evidence type="ECO:0000305" key="3"/>
<gene>
    <name type="primary">BHLH110</name>
    <name type="synonym">EN59</name>
    <name type="ordered locus">At1g27660</name>
    <name type="ORF">T22C5.11</name>
</gene>
<feature type="chain" id="PRO_0000358796" description="Transcription factor bHLH110">
    <location>
        <begin position="1"/>
        <end position="453"/>
    </location>
</feature>
<feature type="domain" description="bHLH" evidence="1">
    <location>
        <begin position="322"/>
        <end position="371"/>
    </location>
</feature>
<feature type="region of interest" description="Disordered" evidence="2">
    <location>
        <begin position="1"/>
        <end position="37"/>
    </location>
</feature>
<feature type="region of interest" description="Disordered" evidence="2">
    <location>
        <begin position="177"/>
        <end position="197"/>
    </location>
</feature>
<feature type="region of interest" description="Disordered" evidence="2">
    <location>
        <begin position="386"/>
        <end position="411"/>
    </location>
</feature>
<feature type="compositionally biased region" description="Low complexity" evidence="2">
    <location>
        <begin position="8"/>
        <end position="32"/>
    </location>
</feature>
<feature type="compositionally biased region" description="Low complexity" evidence="2">
    <location>
        <begin position="177"/>
        <end position="192"/>
    </location>
</feature>
<keyword id="KW-0238">DNA-binding</keyword>
<keyword id="KW-0539">Nucleus</keyword>
<keyword id="KW-1185">Reference proteome</keyword>
<keyword id="KW-0804">Transcription</keyword>
<keyword id="KW-0805">Transcription regulation</keyword>
<sequence>MDSANLHQLQDQLQLVGSSSSSSSLDNNSDPSCYGASSAHQWSPGGISLNSVSLSHNYNNEMLNTRAHNNNNNNNTSECMSLSSIHNHSLIQQQDFPLQWPHDQSSYQHHEGLLKIKEELSSSTISDHQEGISKFTDMLNSPVITNYLKINEHKDYTEKLLLKSMSSGFPINGDYGSSLPSSSSSSSPSSQSHRGNFSQIYPSVNISSLSESRKMSMDDMSNISRPFDINMQVFDGRLFEGNVLVPPFNAQEISSLGMSRGSLPSFGLPFHHHLQQTLPHLSSSPTHQMEMFSNEPQTSEGKRHNFLMATKAGENASKKPRVESRSSCPPFKVRKEKLGDRIAALQQLVSPFGKTDTASVLMEAIGYIKFLQSQIETLSVPYMRASRNRPGKASQLVSQSQEGDEEETRDLRSRGLCLVPLSCMTYVTGDGGDGGGGVGTGFWPTPPGFGGGT</sequence>
<comment type="subunit">
    <text evidence="3">Homodimer.</text>
</comment>
<comment type="subcellular location">
    <subcellularLocation>
        <location evidence="1">Nucleus</location>
    </subcellularLocation>
</comment>
<comment type="sequence caution" evidence="3">
    <conflict type="erroneous gene model prediction">
        <sequence resource="EMBL-CDS" id="AAF24944"/>
    </conflict>
</comment>
<comment type="sequence caution" evidence="3">
    <conflict type="miscellaneous discrepancy">
        <sequence resource="EMBL" id="BX814188"/>
    </conflict>
    <text>Sequencing errors.</text>
</comment>